<feature type="chain" id="PRO_1000068281" description="Peptide methionine sulfoxide reductase MsrB">
    <location>
        <begin position="1"/>
        <end position="131"/>
    </location>
</feature>
<feature type="domain" description="MsrB" evidence="2">
    <location>
        <begin position="8"/>
        <end position="130"/>
    </location>
</feature>
<feature type="active site" description="Nucleophile" evidence="2">
    <location>
        <position position="119"/>
    </location>
</feature>
<feature type="binding site" evidence="2">
    <location>
        <position position="47"/>
    </location>
    <ligand>
        <name>Zn(2+)</name>
        <dbReference type="ChEBI" id="CHEBI:29105"/>
    </ligand>
</feature>
<feature type="binding site" evidence="2">
    <location>
        <position position="50"/>
    </location>
    <ligand>
        <name>Zn(2+)</name>
        <dbReference type="ChEBI" id="CHEBI:29105"/>
    </ligand>
</feature>
<feature type="binding site" evidence="2">
    <location>
        <position position="96"/>
    </location>
    <ligand>
        <name>Zn(2+)</name>
        <dbReference type="ChEBI" id="CHEBI:29105"/>
    </ligand>
</feature>
<feature type="binding site" evidence="2">
    <location>
        <position position="99"/>
    </location>
    <ligand>
        <name>Zn(2+)</name>
        <dbReference type="ChEBI" id="CHEBI:29105"/>
    </ligand>
</feature>
<accession>Q48FR2</accession>
<comment type="catalytic activity">
    <reaction evidence="1">
        <text>L-methionyl-[protein] + [thioredoxin]-disulfide + H2O = L-methionyl-(R)-S-oxide-[protein] + [thioredoxin]-dithiol</text>
        <dbReference type="Rhea" id="RHEA:24164"/>
        <dbReference type="Rhea" id="RHEA-COMP:10698"/>
        <dbReference type="Rhea" id="RHEA-COMP:10700"/>
        <dbReference type="Rhea" id="RHEA-COMP:12313"/>
        <dbReference type="Rhea" id="RHEA-COMP:12314"/>
        <dbReference type="ChEBI" id="CHEBI:15377"/>
        <dbReference type="ChEBI" id="CHEBI:16044"/>
        <dbReference type="ChEBI" id="CHEBI:29950"/>
        <dbReference type="ChEBI" id="CHEBI:45764"/>
        <dbReference type="ChEBI" id="CHEBI:50058"/>
        <dbReference type="EC" id="1.8.4.12"/>
    </reaction>
</comment>
<comment type="cofactor">
    <cofactor evidence="1">
        <name>Zn(2+)</name>
        <dbReference type="ChEBI" id="CHEBI:29105"/>
    </cofactor>
    <text evidence="1">Binds 1 zinc ion per subunit. The zinc ion is important for the structural integrity of the protein.</text>
</comment>
<comment type="similarity">
    <text evidence="1">Belongs to the MsrB Met sulfoxide reductase family.</text>
</comment>
<keyword id="KW-0479">Metal-binding</keyword>
<keyword id="KW-0560">Oxidoreductase</keyword>
<keyword id="KW-0862">Zinc</keyword>
<evidence type="ECO:0000255" key="1">
    <source>
        <dbReference type="HAMAP-Rule" id="MF_01400"/>
    </source>
</evidence>
<evidence type="ECO:0000255" key="2">
    <source>
        <dbReference type="PROSITE-ProRule" id="PRU01126"/>
    </source>
</evidence>
<gene>
    <name evidence="1" type="primary">msrB</name>
    <name type="ordered locus">PSPPH_3630</name>
</gene>
<sequence length="131" mass="14719">MDKLQKTLEEWKEMLDPAQYQVCRLKGTERPFSGKYNETKTEGVYHCICCNEPLFDSTTKFDSGCGWPSFYAPLEGSAVVEVRDVSHGMIRTEVVCAKCDAHLGHVFPDGPPPTGLRYCINSVCLDLVPRQ</sequence>
<organism>
    <name type="scientific">Pseudomonas savastanoi pv. phaseolicola (strain 1448A / Race 6)</name>
    <name type="common">Pseudomonas syringae pv. phaseolicola (strain 1448A / Race 6)</name>
    <dbReference type="NCBI Taxonomy" id="264730"/>
    <lineage>
        <taxon>Bacteria</taxon>
        <taxon>Pseudomonadati</taxon>
        <taxon>Pseudomonadota</taxon>
        <taxon>Gammaproteobacteria</taxon>
        <taxon>Pseudomonadales</taxon>
        <taxon>Pseudomonadaceae</taxon>
        <taxon>Pseudomonas</taxon>
    </lineage>
</organism>
<protein>
    <recommendedName>
        <fullName evidence="1">Peptide methionine sulfoxide reductase MsrB</fullName>
        <ecNumber evidence="1">1.8.4.12</ecNumber>
    </recommendedName>
    <alternativeName>
        <fullName evidence="1">Peptide-methionine (R)-S-oxide reductase</fullName>
    </alternativeName>
</protein>
<proteinExistence type="inferred from homology"/>
<reference key="1">
    <citation type="journal article" date="2005" name="J. Bacteriol.">
        <title>Whole-genome sequence analysis of Pseudomonas syringae pv. phaseolicola 1448A reveals divergence among pathovars in genes involved in virulence and transposition.</title>
        <authorList>
            <person name="Joardar V."/>
            <person name="Lindeberg M."/>
            <person name="Jackson R.W."/>
            <person name="Selengut J."/>
            <person name="Dodson R."/>
            <person name="Brinkac L.M."/>
            <person name="Daugherty S.C."/>
            <person name="DeBoy R.T."/>
            <person name="Durkin A.S."/>
            <person name="Gwinn Giglio M."/>
            <person name="Madupu R."/>
            <person name="Nelson W.C."/>
            <person name="Rosovitz M.J."/>
            <person name="Sullivan S.A."/>
            <person name="Crabtree J."/>
            <person name="Creasy T."/>
            <person name="Davidsen T.M."/>
            <person name="Haft D.H."/>
            <person name="Zafar N."/>
            <person name="Zhou L."/>
            <person name="Halpin R."/>
            <person name="Holley T."/>
            <person name="Khouri H.M."/>
            <person name="Feldblyum T.V."/>
            <person name="White O."/>
            <person name="Fraser C.M."/>
            <person name="Chatterjee A.K."/>
            <person name="Cartinhour S."/>
            <person name="Schneider D."/>
            <person name="Mansfield J.W."/>
            <person name="Collmer A."/>
            <person name="Buell R."/>
        </authorList>
    </citation>
    <scope>NUCLEOTIDE SEQUENCE [LARGE SCALE GENOMIC DNA]</scope>
    <source>
        <strain>1448A / Race 6</strain>
    </source>
</reference>
<dbReference type="EC" id="1.8.4.12" evidence="1"/>
<dbReference type="EMBL" id="CP000058">
    <property type="protein sequence ID" value="AAZ35748.1"/>
    <property type="molecule type" value="Genomic_DNA"/>
</dbReference>
<dbReference type="RefSeq" id="WP_002554534.1">
    <property type="nucleotide sequence ID" value="NC_005773.3"/>
</dbReference>
<dbReference type="SMR" id="Q48FR2"/>
<dbReference type="KEGG" id="psp:PSPPH_3630"/>
<dbReference type="eggNOG" id="COG0229">
    <property type="taxonomic scope" value="Bacteria"/>
</dbReference>
<dbReference type="HOGENOM" id="CLU_031040_8_5_6"/>
<dbReference type="Proteomes" id="UP000000551">
    <property type="component" value="Chromosome"/>
</dbReference>
<dbReference type="GO" id="GO:0005737">
    <property type="term" value="C:cytoplasm"/>
    <property type="evidence" value="ECO:0007669"/>
    <property type="project" value="TreeGrafter"/>
</dbReference>
<dbReference type="GO" id="GO:0033743">
    <property type="term" value="F:peptide-methionine (R)-S-oxide reductase activity"/>
    <property type="evidence" value="ECO:0007669"/>
    <property type="project" value="UniProtKB-UniRule"/>
</dbReference>
<dbReference type="GO" id="GO:0008270">
    <property type="term" value="F:zinc ion binding"/>
    <property type="evidence" value="ECO:0007669"/>
    <property type="project" value="UniProtKB-UniRule"/>
</dbReference>
<dbReference type="GO" id="GO:0030091">
    <property type="term" value="P:protein repair"/>
    <property type="evidence" value="ECO:0007669"/>
    <property type="project" value="InterPro"/>
</dbReference>
<dbReference type="GO" id="GO:0006979">
    <property type="term" value="P:response to oxidative stress"/>
    <property type="evidence" value="ECO:0007669"/>
    <property type="project" value="InterPro"/>
</dbReference>
<dbReference type="FunFam" id="2.170.150.20:FF:000001">
    <property type="entry name" value="Peptide methionine sulfoxide reductase MsrB"/>
    <property type="match status" value="1"/>
</dbReference>
<dbReference type="Gene3D" id="2.170.150.20">
    <property type="entry name" value="Peptide methionine sulfoxide reductase"/>
    <property type="match status" value="1"/>
</dbReference>
<dbReference type="HAMAP" id="MF_01400">
    <property type="entry name" value="MsrB"/>
    <property type="match status" value="1"/>
</dbReference>
<dbReference type="InterPro" id="IPR028427">
    <property type="entry name" value="Met_Sox_Rdtase_MsrB"/>
</dbReference>
<dbReference type="InterPro" id="IPR002579">
    <property type="entry name" value="Met_Sox_Rdtase_MsrB_dom"/>
</dbReference>
<dbReference type="InterPro" id="IPR011057">
    <property type="entry name" value="Mss4-like_sf"/>
</dbReference>
<dbReference type="NCBIfam" id="TIGR00357">
    <property type="entry name" value="peptide-methionine (R)-S-oxide reductase MsrB"/>
    <property type="match status" value="1"/>
</dbReference>
<dbReference type="PANTHER" id="PTHR10173">
    <property type="entry name" value="METHIONINE SULFOXIDE REDUCTASE"/>
    <property type="match status" value="1"/>
</dbReference>
<dbReference type="PANTHER" id="PTHR10173:SF52">
    <property type="entry name" value="METHIONINE-R-SULFOXIDE REDUCTASE B1"/>
    <property type="match status" value="1"/>
</dbReference>
<dbReference type="Pfam" id="PF01641">
    <property type="entry name" value="SelR"/>
    <property type="match status" value="1"/>
</dbReference>
<dbReference type="SUPFAM" id="SSF51316">
    <property type="entry name" value="Mss4-like"/>
    <property type="match status" value="1"/>
</dbReference>
<dbReference type="PROSITE" id="PS51790">
    <property type="entry name" value="MSRB"/>
    <property type="match status" value="1"/>
</dbReference>
<name>MSRB_PSE14</name>